<organism>
    <name type="scientific">Thermomicrobium roseum (strain ATCC 27502 / DSM 5159 / P-2)</name>
    <dbReference type="NCBI Taxonomy" id="309801"/>
    <lineage>
        <taxon>Bacteria</taxon>
        <taxon>Pseudomonadati</taxon>
        <taxon>Thermomicrobiota</taxon>
        <taxon>Thermomicrobia</taxon>
        <taxon>Thermomicrobiales</taxon>
        <taxon>Thermomicrobiaceae</taxon>
        <taxon>Thermomicrobium</taxon>
    </lineage>
</organism>
<name>DXR_THERP</name>
<comment type="function">
    <text evidence="1">Catalyzes the NADPH-dependent rearrangement and reduction of 1-deoxy-D-xylulose-5-phosphate (DXP) to 2-C-methyl-D-erythritol 4-phosphate (MEP).</text>
</comment>
<comment type="catalytic activity">
    <reaction evidence="1">
        <text>2-C-methyl-D-erythritol 4-phosphate + NADP(+) = 1-deoxy-D-xylulose 5-phosphate + NADPH + H(+)</text>
        <dbReference type="Rhea" id="RHEA:13717"/>
        <dbReference type="ChEBI" id="CHEBI:15378"/>
        <dbReference type="ChEBI" id="CHEBI:57783"/>
        <dbReference type="ChEBI" id="CHEBI:57792"/>
        <dbReference type="ChEBI" id="CHEBI:58262"/>
        <dbReference type="ChEBI" id="CHEBI:58349"/>
        <dbReference type="EC" id="1.1.1.267"/>
    </reaction>
    <physiologicalReaction direction="right-to-left" evidence="1">
        <dbReference type="Rhea" id="RHEA:13719"/>
    </physiologicalReaction>
</comment>
<comment type="cofactor">
    <cofactor evidence="1">
        <name>Mg(2+)</name>
        <dbReference type="ChEBI" id="CHEBI:18420"/>
    </cofactor>
    <cofactor evidence="1">
        <name>Mn(2+)</name>
        <dbReference type="ChEBI" id="CHEBI:29035"/>
    </cofactor>
</comment>
<comment type="pathway">
    <text evidence="1">Isoprenoid biosynthesis; isopentenyl diphosphate biosynthesis via DXP pathway; isopentenyl diphosphate from 1-deoxy-D-xylulose 5-phosphate: step 1/6.</text>
</comment>
<comment type="similarity">
    <text evidence="1">Belongs to the DXR family.</text>
</comment>
<reference key="1">
    <citation type="journal article" date="2009" name="PLoS ONE">
        <title>Complete genome sequence of the aerobic CO-oxidizing thermophile Thermomicrobium roseum.</title>
        <authorList>
            <person name="Wu D."/>
            <person name="Raymond J."/>
            <person name="Wu M."/>
            <person name="Chatterji S."/>
            <person name="Ren Q."/>
            <person name="Graham J.E."/>
            <person name="Bryant D.A."/>
            <person name="Robb F."/>
            <person name="Colman A."/>
            <person name="Tallon L.J."/>
            <person name="Badger J.H."/>
            <person name="Madupu R."/>
            <person name="Ward N.L."/>
            <person name="Eisen J.A."/>
        </authorList>
    </citation>
    <scope>NUCLEOTIDE SEQUENCE [LARGE SCALE GENOMIC DNA]</scope>
    <source>
        <strain>ATCC 27502 / DSM 5159 / P-2</strain>
    </source>
</reference>
<evidence type="ECO:0000255" key="1">
    <source>
        <dbReference type="HAMAP-Rule" id="MF_00183"/>
    </source>
</evidence>
<protein>
    <recommendedName>
        <fullName evidence="1">1-deoxy-D-xylulose 5-phosphate reductoisomerase</fullName>
        <shortName evidence="1">DXP reductoisomerase</shortName>
        <ecNumber evidence="1">1.1.1.267</ecNumber>
    </recommendedName>
    <alternativeName>
        <fullName evidence="1">1-deoxyxylulose-5-phosphate reductoisomerase</fullName>
    </alternativeName>
    <alternativeName>
        <fullName evidence="1">2-C-methyl-D-erythritol 4-phosphate synthase</fullName>
    </alternativeName>
</protein>
<keyword id="KW-0414">Isoprene biosynthesis</keyword>
<keyword id="KW-0464">Manganese</keyword>
<keyword id="KW-0479">Metal-binding</keyword>
<keyword id="KW-0521">NADP</keyword>
<keyword id="KW-0560">Oxidoreductase</keyword>
<keyword id="KW-1185">Reference proteome</keyword>
<feature type="chain" id="PRO_1000124115" description="1-deoxy-D-xylulose 5-phosphate reductoisomerase">
    <location>
        <begin position="1"/>
        <end position="385"/>
    </location>
</feature>
<feature type="binding site" evidence="1">
    <location>
        <position position="11"/>
    </location>
    <ligand>
        <name>NADPH</name>
        <dbReference type="ChEBI" id="CHEBI:57783"/>
    </ligand>
</feature>
<feature type="binding site" evidence="1">
    <location>
        <position position="12"/>
    </location>
    <ligand>
        <name>NADPH</name>
        <dbReference type="ChEBI" id="CHEBI:57783"/>
    </ligand>
</feature>
<feature type="binding site" evidence="1">
    <location>
        <position position="13"/>
    </location>
    <ligand>
        <name>NADPH</name>
        <dbReference type="ChEBI" id="CHEBI:57783"/>
    </ligand>
</feature>
<feature type="binding site" evidence="1">
    <location>
        <position position="14"/>
    </location>
    <ligand>
        <name>NADPH</name>
        <dbReference type="ChEBI" id="CHEBI:57783"/>
    </ligand>
</feature>
<feature type="binding site" evidence="1">
    <location>
        <position position="39"/>
    </location>
    <ligand>
        <name>NADPH</name>
        <dbReference type="ChEBI" id="CHEBI:57783"/>
    </ligand>
</feature>
<feature type="binding site" evidence="1">
    <location>
        <position position="117"/>
    </location>
    <ligand>
        <name>NADPH</name>
        <dbReference type="ChEBI" id="CHEBI:57783"/>
    </ligand>
</feature>
<feature type="binding site" evidence="1">
    <location>
        <position position="118"/>
    </location>
    <ligand>
        <name>1-deoxy-D-xylulose 5-phosphate</name>
        <dbReference type="ChEBI" id="CHEBI:57792"/>
    </ligand>
</feature>
<feature type="binding site" evidence="1">
    <location>
        <position position="119"/>
    </location>
    <ligand>
        <name>NADPH</name>
        <dbReference type="ChEBI" id="CHEBI:57783"/>
    </ligand>
</feature>
<feature type="binding site" evidence="1">
    <location>
        <position position="143"/>
    </location>
    <ligand>
        <name>Mn(2+)</name>
        <dbReference type="ChEBI" id="CHEBI:29035"/>
    </ligand>
</feature>
<feature type="binding site" evidence="1">
    <location>
        <position position="144"/>
    </location>
    <ligand>
        <name>1-deoxy-D-xylulose 5-phosphate</name>
        <dbReference type="ChEBI" id="CHEBI:57792"/>
    </ligand>
</feature>
<feature type="binding site" evidence="1">
    <location>
        <position position="145"/>
    </location>
    <ligand>
        <name>1-deoxy-D-xylulose 5-phosphate</name>
        <dbReference type="ChEBI" id="CHEBI:57792"/>
    </ligand>
</feature>
<feature type="binding site" evidence="1">
    <location>
        <position position="145"/>
    </location>
    <ligand>
        <name>Mn(2+)</name>
        <dbReference type="ChEBI" id="CHEBI:29035"/>
    </ligand>
</feature>
<feature type="binding site" evidence="1">
    <location>
        <position position="170"/>
    </location>
    <ligand>
        <name>1-deoxy-D-xylulose 5-phosphate</name>
        <dbReference type="ChEBI" id="CHEBI:57792"/>
    </ligand>
</feature>
<feature type="binding site" evidence="1">
    <location>
        <position position="193"/>
    </location>
    <ligand>
        <name>1-deoxy-D-xylulose 5-phosphate</name>
        <dbReference type="ChEBI" id="CHEBI:57792"/>
    </ligand>
</feature>
<feature type="binding site" evidence="1">
    <location>
        <position position="199"/>
    </location>
    <ligand>
        <name>NADPH</name>
        <dbReference type="ChEBI" id="CHEBI:57783"/>
    </ligand>
</feature>
<feature type="binding site" evidence="1">
    <location>
        <position position="206"/>
    </location>
    <ligand>
        <name>1-deoxy-D-xylulose 5-phosphate</name>
        <dbReference type="ChEBI" id="CHEBI:57792"/>
    </ligand>
</feature>
<feature type="binding site" evidence="1">
    <location>
        <position position="211"/>
    </location>
    <ligand>
        <name>1-deoxy-D-xylulose 5-phosphate</name>
        <dbReference type="ChEBI" id="CHEBI:57792"/>
    </ligand>
</feature>
<feature type="binding site" evidence="1">
    <location>
        <position position="212"/>
    </location>
    <ligand>
        <name>1-deoxy-D-xylulose 5-phosphate</name>
        <dbReference type="ChEBI" id="CHEBI:57792"/>
    </ligand>
</feature>
<feature type="binding site" evidence="1">
    <location>
        <position position="215"/>
    </location>
    <ligand>
        <name>1-deoxy-D-xylulose 5-phosphate</name>
        <dbReference type="ChEBI" id="CHEBI:57792"/>
    </ligand>
</feature>
<feature type="binding site" evidence="1">
    <location>
        <position position="215"/>
    </location>
    <ligand>
        <name>Mn(2+)</name>
        <dbReference type="ChEBI" id="CHEBI:29035"/>
    </ligand>
</feature>
<dbReference type="EC" id="1.1.1.267" evidence="1"/>
<dbReference type="EMBL" id="CP001275">
    <property type="protein sequence ID" value="ACM06158.1"/>
    <property type="molecule type" value="Genomic_DNA"/>
</dbReference>
<dbReference type="RefSeq" id="WP_015921966.1">
    <property type="nucleotide sequence ID" value="NC_011959.1"/>
</dbReference>
<dbReference type="SMR" id="B9L006"/>
<dbReference type="STRING" id="309801.trd_1005"/>
<dbReference type="KEGG" id="tro:trd_1005"/>
<dbReference type="eggNOG" id="COG0743">
    <property type="taxonomic scope" value="Bacteria"/>
</dbReference>
<dbReference type="HOGENOM" id="CLU_035714_4_0_0"/>
<dbReference type="OrthoDB" id="9806546at2"/>
<dbReference type="UniPathway" id="UPA00056">
    <property type="reaction ID" value="UER00092"/>
</dbReference>
<dbReference type="Proteomes" id="UP000000447">
    <property type="component" value="Chromosome"/>
</dbReference>
<dbReference type="GO" id="GO:0030604">
    <property type="term" value="F:1-deoxy-D-xylulose-5-phosphate reductoisomerase activity"/>
    <property type="evidence" value="ECO:0007669"/>
    <property type="project" value="UniProtKB-UniRule"/>
</dbReference>
<dbReference type="GO" id="GO:0030145">
    <property type="term" value="F:manganese ion binding"/>
    <property type="evidence" value="ECO:0007669"/>
    <property type="project" value="TreeGrafter"/>
</dbReference>
<dbReference type="GO" id="GO:0070402">
    <property type="term" value="F:NADPH binding"/>
    <property type="evidence" value="ECO:0007669"/>
    <property type="project" value="InterPro"/>
</dbReference>
<dbReference type="GO" id="GO:0051484">
    <property type="term" value="P:isopentenyl diphosphate biosynthetic process, methylerythritol 4-phosphate pathway involved in terpenoid biosynthetic process"/>
    <property type="evidence" value="ECO:0007669"/>
    <property type="project" value="TreeGrafter"/>
</dbReference>
<dbReference type="FunFam" id="3.40.50.720:FF:000045">
    <property type="entry name" value="1-deoxy-D-xylulose 5-phosphate reductoisomerase"/>
    <property type="match status" value="1"/>
</dbReference>
<dbReference type="Gene3D" id="1.10.1740.10">
    <property type="match status" value="1"/>
</dbReference>
<dbReference type="Gene3D" id="3.40.50.720">
    <property type="entry name" value="NAD(P)-binding Rossmann-like Domain"/>
    <property type="match status" value="1"/>
</dbReference>
<dbReference type="HAMAP" id="MF_00183">
    <property type="entry name" value="DXP_reductoisom"/>
    <property type="match status" value="1"/>
</dbReference>
<dbReference type="InterPro" id="IPR003821">
    <property type="entry name" value="DXP_reductoisomerase"/>
</dbReference>
<dbReference type="InterPro" id="IPR013644">
    <property type="entry name" value="DXP_reductoisomerase_C"/>
</dbReference>
<dbReference type="InterPro" id="IPR013512">
    <property type="entry name" value="DXP_reductoisomerase_N"/>
</dbReference>
<dbReference type="InterPro" id="IPR026877">
    <property type="entry name" value="DXPR_C"/>
</dbReference>
<dbReference type="InterPro" id="IPR036169">
    <property type="entry name" value="DXPR_C_sf"/>
</dbReference>
<dbReference type="InterPro" id="IPR036291">
    <property type="entry name" value="NAD(P)-bd_dom_sf"/>
</dbReference>
<dbReference type="NCBIfam" id="TIGR00243">
    <property type="entry name" value="Dxr"/>
    <property type="match status" value="1"/>
</dbReference>
<dbReference type="PANTHER" id="PTHR30525">
    <property type="entry name" value="1-DEOXY-D-XYLULOSE 5-PHOSPHATE REDUCTOISOMERASE"/>
    <property type="match status" value="1"/>
</dbReference>
<dbReference type="PANTHER" id="PTHR30525:SF0">
    <property type="entry name" value="1-DEOXY-D-XYLULOSE 5-PHOSPHATE REDUCTOISOMERASE, CHLOROPLASTIC"/>
    <property type="match status" value="1"/>
</dbReference>
<dbReference type="Pfam" id="PF08436">
    <property type="entry name" value="DXP_redisom_C"/>
    <property type="match status" value="1"/>
</dbReference>
<dbReference type="Pfam" id="PF02670">
    <property type="entry name" value="DXP_reductoisom"/>
    <property type="match status" value="1"/>
</dbReference>
<dbReference type="Pfam" id="PF13288">
    <property type="entry name" value="DXPR_C"/>
    <property type="match status" value="1"/>
</dbReference>
<dbReference type="PIRSF" id="PIRSF006205">
    <property type="entry name" value="Dxp_reductismrs"/>
    <property type="match status" value="1"/>
</dbReference>
<dbReference type="SUPFAM" id="SSF69055">
    <property type="entry name" value="1-deoxy-D-xylulose-5-phosphate reductoisomerase, C-terminal domain"/>
    <property type="match status" value="1"/>
</dbReference>
<dbReference type="SUPFAM" id="SSF55347">
    <property type="entry name" value="Glyceraldehyde-3-phosphate dehydrogenase-like, C-terminal domain"/>
    <property type="match status" value="1"/>
</dbReference>
<dbReference type="SUPFAM" id="SSF51735">
    <property type="entry name" value="NAD(P)-binding Rossmann-fold domains"/>
    <property type="match status" value="1"/>
</dbReference>
<sequence>MRLGVSLLGSTGSIGRQTLEVVAAHPDRFRVVALAARSQIDALQEQVRIFRPELVAIAQESLGISFPDTRVVSGPGGLVEAATYETADIVVIALSGNSGIEPTLAAAAAGKTIALANKESVVCAGPLLRDIQSRTGCQVRPVDSEHSALWQLLQLPHRPAEIARVILTASGGPFRDRPLEHLNQVTPDEALAHPTWRMGPKITIDSATLLNKGLELIEAHWLFDLPFERLDVVIHPQSIVHALLAFVDGTTVAHAAYPDMRLPIQYALFYPERVASTVPPLDLARIGPLEFFPPDTERFPALPLAREVGIAGSTYPTVLCAADEIAVEAFLAGQIRFTEIVPLIRSVLDRHQPASEPLTLEAILAADRWARSVARELVGRAIRHA</sequence>
<accession>B9L006</accession>
<gene>
    <name evidence="1" type="primary">dxr</name>
    <name type="ordered locus">trd_1005</name>
</gene>
<proteinExistence type="inferred from homology"/>